<name>RRF_SHEWM</name>
<reference key="1">
    <citation type="submission" date="2008-02" db="EMBL/GenBank/DDBJ databases">
        <title>Complete sequence of Shewanella woodyi ATCC 51908.</title>
        <authorList>
            <consortium name="US DOE Joint Genome Institute"/>
            <person name="Copeland A."/>
            <person name="Lucas S."/>
            <person name="Lapidus A."/>
            <person name="Glavina del Rio T."/>
            <person name="Dalin E."/>
            <person name="Tice H."/>
            <person name="Bruce D."/>
            <person name="Goodwin L."/>
            <person name="Pitluck S."/>
            <person name="Sims D."/>
            <person name="Brettin T."/>
            <person name="Detter J.C."/>
            <person name="Han C."/>
            <person name="Kuske C.R."/>
            <person name="Schmutz J."/>
            <person name="Larimer F."/>
            <person name="Land M."/>
            <person name="Hauser L."/>
            <person name="Kyrpides N."/>
            <person name="Lykidis A."/>
            <person name="Zhao J.-S."/>
            <person name="Richardson P."/>
        </authorList>
    </citation>
    <scope>NUCLEOTIDE SEQUENCE [LARGE SCALE GENOMIC DNA]</scope>
    <source>
        <strain>ATCC 51908 / MS32</strain>
    </source>
</reference>
<gene>
    <name evidence="1" type="primary">frr</name>
    <name type="ordered locus">Swoo_3278</name>
</gene>
<feature type="chain" id="PRO_1000090786" description="Ribosome-recycling factor">
    <location>
        <begin position="1"/>
        <end position="185"/>
    </location>
</feature>
<protein>
    <recommendedName>
        <fullName evidence="1">Ribosome-recycling factor</fullName>
        <shortName evidence="1">RRF</shortName>
    </recommendedName>
    <alternativeName>
        <fullName evidence="1">Ribosome-releasing factor</fullName>
    </alternativeName>
</protein>
<evidence type="ECO:0000255" key="1">
    <source>
        <dbReference type="HAMAP-Rule" id="MF_00040"/>
    </source>
</evidence>
<proteinExistence type="inferred from homology"/>
<sequence length="185" mass="20574">MLNEIKKDAQDRMDKCVEATKTQMAKVRTGRAHPSLLDSIKVPYYGSLTPLKQVGNVSIEDSRTLAISVFDSTMIPAVEKAIMSSDLGLNPMSAGATIRVPLPALTEERRKDLIKVVRAEAENGRIAVRNVRRDANSDVKALEKEKECTEDDVHRSEDEVQKFTDAHIKLIDEILAAKEAELMEV</sequence>
<accession>B1KNU0</accession>
<organism>
    <name type="scientific">Shewanella woodyi (strain ATCC 51908 / MS32)</name>
    <dbReference type="NCBI Taxonomy" id="392500"/>
    <lineage>
        <taxon>Bacteria</taxon>
        <taxon>Pseudomonadati</taxon>
        <taxon>Pseudomonadota</taxon>
        <taxon>Gammaproteobacteria</taxon>
        <taxon>Alteromonadales</taxon>
        <taxon>Shewanellaceae</taxon>
        <taxon>Shewanella</taxon>
    </lineage>
</organism>
<keyword id="KW-0963">Cytoplasm</keyword>
<keyword id="KW-0648">Protein biosynthesis</keyword>
<keyword id="KW-1185">Reference proteome</keyword>
<comment type="function">
    <text evidence="1">Responsible for the release of ribosomes from messenger RNA at the termination of protein biosynthesis. May increase the efficiency of translation by recycling ribosomes from one round of translation to another.</text>
</comment>
<comment type="subcellular location">
    <subcellularLocation>
        <location evidence="1">Cytoplasm</location>
    </subcellularLocation>
</comment>
<comment type="similarity">
    <text evidence="1">Belongs to the RRF family.</text>
</comment>
<dbReference type="EMBL" id="CP000961">
    <property type="protein sequence ID" value="ACA87548.1"/>
    <property type="molecule type" value="Genomic_DNA"/>
</dbReference>
<dbReference type="RefSeq" id="WP_012325884.1">
    <property type="nucleotide sequence ID" value="NC_010506.1"/>
</dbReference>
<dbReference type="SMR" id="B1KNU0"/>
<dbReference type="STRING" id="392500.Swoo_3278"/>
<dbReference type="KEGG" id="swd:Swoo_3278"/>
<dbReference type="eggNOG" id="COG0233">
    <property type="taxonomic scope" value="Bacteria"/>
</dbReference>
<dbReference type="HOGENOM" id="CLU_073981_2_1_6"/>
<dbReference type="Proteomes" id="UP000002168">
    <property type="component" value="Chromosome"/>
</dbReference>
<dbReference type="GO" id="GO:0005829">
    <property type="term" value="C:cytosol"/>
    <property type="evidence" value="ECO:0007669"/>
    <property type="project" value="GOC"/>
</dbReference>
<dbReference type="GO" id="GO:0043023">
    <property type="term" value="F:ribosomal large subunit binding"/>
    <property type="evidence" value="ECO:0007669"/>
    <property type="project" value="TreeGrafter"/>
</dbReference>
<dbReference type="GO" id="GO:0002184">
    <property type="term" value="P:cytoplasmic translational termination"/>
    <property type="evidence" value="ECO:0007669"/>
    <property type="project" value="TreeGrafter"/>
</dbReference>
<dbReference type="CDD" id="cd00520">
    <property type="entry name" value="RRF"/>
    <property type="match status" value="1"/>
</dbReference>
<dbReference type="FunFam" id="1.10.132.20:FF:000001">
    <property type="entry name" value="Ribosome-recycling factor"/>
    <property type="match status" value="1"/>
</dbReference>
<dbReference type="FunFam" id="3.30.1360.40:FF:000001">
    <property type="entry name" value="Ribosome-recycling factor"/>
    <property type="match status" value="1"/>
</dbReference>
<dbReference type="Gene3D" id="3.30.1360.40">
    <property type="match status" value="1"/>
</dbReference>
<dbReference type="Gene3D" id="1.10.132.20">
    <property type="entry name" value="Ribosome-recycling factor"/>
    <property type="match status" value="1"/>
</dbReference>
<dbReference type="HAMAP" id="MF_00040">
    <property type="entry name" value="RRF"/>
    <property type="match status" value="1"/>
</dbReference>
<dbReference type="InterPro" id="IPR002661">
    <property type="entry name" value="Ribosome_recyc_fac"/>
</dbReference>
<dbReference type="InterPro" id="IPR023584">
    <property type="entry name" value="Ribosome_recyc_fac_dom"/>
</dbReference>
<dbReference type="InterPro" id="IPR036191">
    <property type="entry name" value="RRF_sf"/>
</dbReference>
<dbReference type="NCBIfam" id="TIGR00496">
    <property type="entry name" value="frr"/>
    <property type="match status" value="1"/>
</dbReference>
<dbReference type="PANTHER" id="PTHR20982:SF3">
    <property type="entry name" value="MITOCHONDRIAL RIBOSOME RECYCLING FACTOR PSEUDO 1"/>
    <property type="match status" value="1"/>
</dbReference>
<dbReference type="PANTHER" id="PTHR20982">
    <property type="entry name" value="RIBOSOME RECYCLING FACTOR"/>
    <property type="match status" value="1"/>
</dbReference>
<dbReference type="Pfam" id="PF01765">
    <property type="entry name" value="RRF"/>
    <property type="match status" value="1"/>
</dbReference>
<dbReference type="SUPFAM" id="SSF55194">
    <property type="entry name" value="Ribosome recycling factor, RRF"/>
    <property type="match status" value="1"/>
</dbReference>